<reference key="1">
    <citation type="journal article" date="1991" name="Biochemistry">
        <title>An anti-insect toxin purified from the scorpion Androctonus australis hector also acts on the alpha- and beta-sites of the mammalian sodium channel: sequence and circular dichroism study.</title>
        <authorList>
            <person name="Loret E.P."/>
            <person name="Martin-Eauclaire M.-F."/>
            <person name="Mansuelle P."/>
            <person name="Sampieri F."/>
            <person name="Granier C."/>
            <person name="Rochat H."/>
        </authorList>
    </citation>
    <scope>PROTEIN SEQUENCE</scope>
    <scope>SUBCELLULAR LOCATION</scope>
    <scope>FUNCTION</scope>
    <source>
        <strain>Hector</strain>
        <tissue>Venom</tissue>
    </source>
</reference>
<feature type="chain" id="PRO_0000066708" description="Toxin AaHIT4" evidence="2">
    <location>
        <begin position="1"/>
        <end position="65"/>
    </location>
</feature>
<feature type="domain" description="LCN-type CS-alpha/beta" evidence="1">
    <location>
        <begin position="1"/>
        <end position="64"/>
    </location>
</feature>
<feature type="disulfide bond" evidence="1">
    <location>
        <begin position="12"/>
        <end position="63"/>
    </location>
</feature>
<feature type="disulfide bond" evidence="1">
    <location>
        <begin position="16"/>
        <end position="38"/>
    </location>
</feature>
<feature type="disulfide bond" evidence="1">
    <location>
        <begin position="23"/>
        <end position="45"/>
    </location>
</feature>
<feature type="disulfide bond" evidence="1">
    <location>
        <begin position="27"/>
        <end position="47"/>
    </location>
</feature>
<dbReference type="PIR" id="A38394">
    <property type="entry name" value="A38394"/>
</dbReference>
<dbReference type="SMR" id="P21150"/>
<dbReference type="GO" id="GO:0005576">
    <property type="term" value="C:extracellular region"/>
    <property type="evidence" value="ECO:0007669"/>
    <property type="project" value="UniProtKB-SubCell"/>
</dbReference>
<dbReference type="GO" id="GO:0019871">
    <property type="term" value="F:sodium channel inhibitor activity"/>
    <property type="evidence" value="ECO:0007669"/>
    <property type="project" value="InterPro"/>
</dbReference>
<dbReference type="GO" id="GO:0090729">
    <property type="term" value="F:toxin activity"/>
    <property type="evidence" value="ECO:0007669"/>
    <property type="project" value="UniProtKB-KW"/>
</dbReference>
<dbReference type="GO" id="GO:0006952">
    <property type="term" value="P:defense response"/>
    <property type="evidence" value="ECO:0007669"/>
    <property type="project" value="InterPro"/>
</dbReference>
<dbReference type="CDD" id="cd23106">
    <property type="entry name" value="neurotoxins_LC_scorpion"/>
    <property type="match status" value="1"/>
</dbReference>
<dbReference type="Gene3D" id="3.30.30.10">
    <property type="entry name" value="Knottin, scorpion toxin-like"/>
    <property type="match status" value="1"/>
</dbReference>
<dbReference type="InterPro" id="IPR044062">
    <property type="entry name" value="LCN-type_CS_alpha_beta_dom"/>
</dbReference>
<dbReference type="InterPro" id="IPR003614">
    <property type="entry name" value="Scorpion_toxin-like"/>
</dbReference>
<dbReference type="InterPro" id="IPR036574">
    <property type="entry name" value="Scorpion_toxin-like_sf"/>
</dbReference>
<dbReference type="InterPro" id="IPR002061">
    <property type="entry name" value="Scorpion_toxinL/defensin"/>
</dbReference>
<dbReference type="Pfam" id="PF00537">
    <property type="entry name" value="Toxin_3"/>
    <property type="match status" value="1"/>
</dbReference>
<dbReference type="SMART" id="SM00505">
    <property type="entry name" value="Knot1"/>
    <property type="match status" value="1"/>
</dbReference>
<dbReference type="SUPFAM" id="SSF57095">
    <property type="entry name" value="Scorpion toxin-like"/>
    <property type="match status" value="1"/>
</dbReference>
<dbReference type="PROSITE" id="PS51863">
    <property type="entry name" value="LCN_CSAB"/>
    <property type="match status" value="1"/>
</dbReference>
<proteinExistence type="evidence at protein level"/>
<accession>P21150</accession>
<sequence length="65" mass="7786">EHGYLLNKYTGCKVWCVINNEECGYLCNKRRGGYYGYCYFWKLACYCQGARKSELWNYKTNKCDL</sequence>
<evidence type="ECO:0000255" key="1">
    <source>
        <dbReference type="PROSITE-ProRule" id="PRU01210"/>
    </source>
</evidence>
<evidence type="ECO:0000269" key="2">
    <source>
    </source>
</evidence>
<evidence type="ECO:0000303" key="3">
    <source>
    </source>
</evidence>
<evidence type="ECO:0000305" key="4"/>
<evidence type="ECO:0000305" key="5">
    <source>
    </source>
</evidence>
<protein>
    <recommendedName>
        <fullName>Toxin AaHIT4</fullName>
        <shortName evidence="3">AaH IT4</shortName>
        <shortName>AaIT4</shortName>
    </recommendedName>
    <alternativeName>
        <fullName>Insect toxin 4</fullName>
    </alternativeName>
</protein>
<organism>
    <name type="scientific">Androctonus australis</name>
    <name type="common">Sahara scorpion</name>
    <dbReference type="NCBI Taxonomy" id="6858"/>
    <lineage>
        <taxon>Eukaryota</taxon>
        <taxon>Metazoa</taxon>
        <taxon>Ecdysozoa</taxon>
        <taxon>Arthropoda</taxon>
        <taxon>Chelicerata</taxon>
        <taxon>Arachnida</taxon>
        <taxon>Scorpiones</taxon>
        <taxon>Buthida</taxon>
        <taxon>Buthoidea</taxon>
        <taxon>Buthidae</taxon>
        <taxon>Androctonus</taxon>
    </lineage>
</organism>
<comment type="function">
    <text evidence="2">Has a toxic effect on insects and mammals and is capable of competing with anti-insect scorpion toxins for binding to the sodium channel (Nav) of insects. It also modulates the binding of alpha-type and beta-type anti-mammal scorpion toxins to the mammal sodium channel. It may act on both site 3 and site 4 of voltage-gated sodium channels.</text>
</comment>
<comment type="subcellular location">
    <subcellularLocation>
        <location evidence="2">Secreted</location>
    </subcellularLocation>
</comment>
<comment type="tissue specificity">
    <text evidence="5">Expressed by the venom gland.</text>
</comment>
<comment type="domain">
    <text evidence="4">Has the structural arrangement of an alpha-helix connected to antiparallel beta-sheets by disulfide bonds (CS-alpha/beta).</text>
</comment>
<comment type="similarity">
    <text evidence="4">Belongs to the long (4 C-C) scorpion toxin superfamily. Sodium channel inhibitor family.</text>
</comment>
<keyword id="KW-0903">Direct protein sequencing</keyword>
<keyword id="KW-1015">Disulfide bond</keyword>
<keyword id="KW-0872">Ion channel impairing toxin</keyword>
<keyword id="KW-0528">Neurotoxin</keyword>
<keyword id="KW-0964">Secreted</keyword>
<keyword id="KW-0800">Toxin</keyword>
<keyword id="KW-0738">Voltage-gated sodium channel impairing toxin</keyword>
<name>SIX4_ANDAU</name>